<proteinExistence type="evidence at transcript level"/>
<name>RB27B_RAT</name>
<protein>
    <recommendedName>
        <fullName>Ras-related protein Rab-27B</fullName>
        <ecNumber evidence="2">3.6.5.2</ecNumber>
    </recommendedName>
</protein>
<keyword id="KW-0007">Acetylation</keyword>
<keyword id="KW-1015">Disulfide bond</keyword>
<keyword id="KW-0967">Endosome</keyword>
<keyword id="KW-0342">GTP-binding</keyword>
<keyword id="KW-0378">Hydrolase</keyword>
<keyword id="KW-0449">Lipoprotein</keyword>
<keyword id="KW-0472">Membrane</keyword>
<keyword id="KW-0488">Methylation</keyword>
<keyword id="KW-0547">Nucleotide-binding</keyword>
<keyword id="KW-0636">Prenylation</keyword>
<keyword id="KW-1185">Reference proteome</keyword>
<comment type="function">
    <text evidence="2 3 5">Small GTPase which cycles between active GTP-bound and inactive GDP-bound states. In its active state, binds to a variety of effector proteins to regulate homeostasis of late endocytic pathway, including endosomal positioning, maturation and secretion (By similarity). Plays a role in NTRK2/TRKB axonal anterograde transport by facilitating the association of NTRK2/TRKB with KLC1 (PubMed:21775604). May be involved in targeting uroplakins to urothelial apical membranes.</text>
</comment>
<comment type="catalytic activity">
    <reaction evidence="2">
        <text>GTP + H2O = GDP + phosphate + H(+)</text>
        <dbReference type="Rhea" id="RHEA:19669"/>
        <dbReference type="ChEBI" id="CHEBI:15377"/>
        <dbReference type="ChEBI" id="CHEBI:15378"/>
        <dbReference type="ChEBI" id="CHEBI:37565"/>
        <dbReference type="ChEBI" id="CHEBI:43474"/>
        <dbReference type="ChEBI" id="CHEBI:58189"/>
        <dbReference type="EC" id="3.6.5.2"/>
    </reaction>
    <physiologicalReaction direction="left-to-right" evidence="2">
        <dbReference type="Rhea" id="RHEA:19670"/>
    </physiologicalReaction>
</comment>
<comment type="activity regulation">
    <text evidence="2">Regulated by guanine nucleotide exchange factors (GEFs) which promote the exchange of bound GDP for free GTP, GTPase activating proteins (GAPs) which increase the GTP hydrolysis activity, and GDP dissociation inhibitors which inhibit the dissociation of the nucleotide from the GTPase. Activated by GEFs such as DENND10.</text>
</comment>
<comment type="subunit">
    <text evidence="2 4">Interacts with SYTL2, SYTL4, MYRIP and MLPH. Interacts with RPH3A and RPH3A (By similarity). Interacts (GDP-bound form preferentially) with DENND10 (By similarity).</text>
</comment>
<comment type="subcellular location">
    <subcellularLocation>
        <location evidence="2">Membrane</location>
        <topology evidence="2">Lipid-anchor</topology>
    </subcellularLocation>
    <subcellularLocation>
        <location evidence="2">Late endosome</location>
    </subcellularLocation>
</comment>
<comment type="similarity">
    <text evidence="6">Belongs to the small GTPase superfamily. Rab family.</text>
</comment>
<organism>
    <name type="scientific">Rattus norvegicus</name>
    <name type="common">Rat</name>
    <dbReference type="NCBI Taxonomy" id="10116"/>
    <lineage>
        <taxon>Eukaryota</taxon>
        <taxon>Metazoa</taxon>
        <taxon>Chordata</taxon>
        <taxon>Craniata</taxon>
        <taxon>Vertebrata</taxon>
        <taxon>Euteleostomi</taxon>
        <taxon>Mammalia</taxon>
        <taxon>Eutheria</taxon>
        <taxon>Euarchontoglires</taxon>
        <taxon>Glires</taxon>
        <taxon>Rodentia</taxon>
        <taxon>Myomorpha</taxon>
        <taxon>Muroidea</taxon>
        <taxon>Muridae</taxon>
        <taxon>Murinae</taxon>
        <taxon>Rattus</taxon>
    </lineage>
</organism>
<accession>Q99P74</accession>
<gene>
    <name type="primary">Rab27b</name>
</gene>
<dbReference type="EC" id="3.6.5.2" evidence="2"/>
<dbReference type="EMBL" id="AF325693">
    <property type="protein sequence ID" value="AAG49587.1"/>
    <property type="molecule type" value="mRNA"/>
</dbReference>
<dbReference type="RefSeq" id="NP_445911.1">
    <property type="nucleotide sequence ID" value="NM_053459.1"/>
</dbReference>
<dbReference type="RefSeq" id="XP_006254992.1">
    <property type="nucleotide sequence ID" value="XM_006254930.5"/>
</dbReference>
<dbReference type="RefSeq" id="XP_038953121.1">
    <property type="nucleotide sequence ID" value="XM_039097193.2"/>
</dbReference>
<dbReference type="RefSeq" id="XP_038953122.1">
    <property type="nucleotide sequence ID" value="XM_039097194.2"/>
</dbReference>
<dbReference type="RefSeq" id="XP_038953123.1">
    <property type="nucleotide sequence ID" value="XM_039097195.2"/>
</dbReference>
<dbReference type="RefSeq" id="XP_063133705.1">
    <property type="nucleotide sequence ID" value="XM_063277635.1"/>
</dbReference>
<dbReference type="RefSeq" id="XP_063133706.1">
    <property type="nucleotide sequence ID" value="XM_063277636.1"/>
</dbReference>
<dbReference type="SMR" id="Q99P74"/>
<dbReference type="CORUM" id="Q99P74"/>
<dbReference type="FunCoup" id="Q99P74">
    <property type="interactions" value="362"/>
</dbReference>
<dbReference type="STRING" id="10116.ENSRNOP00000016369"/>
<dbReference type="iPTMnet" id="Q99P74"/>
<dbReference type="PhosphoSitePlus" id="Q99P74"/>
<dbReference type="jPOST" id="Q99P74"/>
<dbReference type="PaxDb" id="10116-ENSRNOP00000016369"/>
<dbReference type="Ensembl" id="ENSRNOT00000106463.1">
    <property type="protein sequence ID" value="ENSRNOP00000095120.1"/>
    <property type="gene ID" value="ENSRNOG00000012176.7"/>
</dbReference>
<dbReference type="GeneID" id="84590"/>
<dbReference type="KEGG" id="rno:84590"/>
<dbReference type="AGR" id="RGD:620114"/>
<dbReference type="CTD" id="5874"/>
<dbReference type="RGD" id="620114">
    <property type="gene designation" value="Rab27b"/>
</dbReference>
<dbReference type="eggNOG" id="KOG0081">
    <property type="taxonomic scope" value="Eukaryota"/>
</dbReference>
<dbReference type="GeneTree" id="ENSGT00940000157449"/>
<dbReference type="HOGENOM" id="CLU_041217_10_1_1"/>
<dbReference type="InParanoid" id="Q99P74"/>
<dbReference type="OMA" id="IEKKCAC"/>
<dbReference type="OrthoDB" id="9989112at2759"/>
<dbReference type="PhylomeDB" id="Q99P74"/>
<dbReference type="TreeFam" id="TF312895"/>
<dbReference type="Reactome" id="R-RNO-114608">
    <property type="pathway name" value="Platelet degranulation"/>
</dbReference>
<dbReference type="Reactome" id="R-RNO-8873719">
    <property type="pathway name" value="RAB geranylgeranylation"/>
</dbReference>
<dbReference type="Reactome" id="R-RNO-8876198">
    <property type="pathway name" value="RAB GEFs exchange GTP for GDP on RABs"/>
</dbReference>
<dbReference type="PRO" id="PR:Q99P74"/>
<dbReference type="Proteomes" id="UP000002494">
    <property type="component" value="Chromosome 18"/>
</dbReference>
<dbReference type="Bgee" id="ENSRNOG00000012176">
    <property type="expression patterns" value="Expressed in stomach and 17 other cell types or tissues"/>
</dbReference>
<dbReference type="GO" id="GO:0016324">
    <property type="term" value="C:apical plasma membrane"/>
    <property type="evidence" value="ECO:0000314"/>
    <property type="project" value="RGD"/>
</dbReference>
<dbReference type="GO" id="GO:1904115">
    <property type="term" value="C:axon cytoplasm"/>
    <property type="evidence" value="ECO:0007669"/>
    <property type="project" value="GOC"/>
</dbReference>
<dbReference type="GO" id="GO:0070382">
    <property type="term" value="C:exocytic vesicle"/>
    <property type="evidence" value="ECO:0000318"/>
    <property type="project" value="GO_Central"/>
</dbReference>
<dbReference type="GO" id="GO:0005794">
    <property type="term" value="C:Golgi apparatus"/>
    <property type="evidence" value="ECO:0000266"/>
    <property type="project" value="RGD"/>
</dbReference>
<dbReference type="GO" id="GO:0005795">
    <property type="term" value="C:Golgi stack"/>
    <property type="evidence" value="ECO:0000266"/>
    <property type="project" value="RGD"/>
</dbReference>
<dbReference type="GO" id="GO:0005770">
    <property type="term" value="C:late endosome"/>
    <property type="evidence" value="ECO:0000250"/>
    <property type="project" value="UniProtKB"/>
</dbReference>
<dbReference type="GO" id="GO:0042470">
    <property type="term" value="C:melanosome"/>
    <property type="evidence" value="ECO:0000266"/>
    <property type="project" value="RGD"/>
</dbReference>
<dbReference type="GO" id="GO:0032585">
    <property type="term" value="C:multivesicular body membrane"/>
    <property type="evidence" value="ECO:0000266"/>
    <property type="project" value="RGD"/>
</dbReference>
<dbReference type="GO" id="GO:0030141">
    <property type="term" value="C:secretory granule"/>
    <property type="evidence" value="ECO:0000318"/>
    <property type="project" value="GO_Central"/>
</dbReference>
<dbReference type="GO" id="GO:0030672">
    <property type="term" value="C:synaptic vesicle membrane"/>
    <property type="evidence" value="ECO:0000314"/>
    <property type="project" value="SynGO-UCL"/>
</dbReference>
<dbReference type="GO" id="GO:0030140">
    <property type="term" value="C:trans-Golgi network transport vesicle"/>
    <property type="evidence" value="ECO:0000266"/>
    <property type="project" value="RGD"/>
</dbReference>
<dbReference type="GO" id="GO:0042589">
    <property type="term" value="C:zymogen granule membrane"/>
    <property type="evidence" value="ECO:0000314"/>
    <property type="project" value="RGD"/>
</dbReference>
<dbReference type="GO" id="GO:0003925">
    <property type="term" value="F:G protein activity"/>
    <property type="evidence" value="ECO:0007669"/>
    <property type="project" value="UniProtKB-EC"/>
</dbReference>
<dbReference type="GO" id="GO:0019003">
    <property type="term" value="F:GDP binding"/>
    <property type="evidence" value="ECO:0000250"/>
    <property type="project" value="UniProtKB"/>
</dbReference>
<dbReference type="GO" id="GO:0005525">
    <property type="term" value="F:GTP binding"/>
    <property type="evidence" value="ECO:0000250"/>
    <property type="project" value="UniProtKB"/>
</dbReference>
<dbReference type="GO" id="GO:0003924">
    <property type="term" value="F:GTPase activity"/>
    <property type="evidence" value="ECO:0000250"/>
    <property type="project" value="UniProtKB"/>
</dbReference>
<dbReference type="GO" id="GO:0031489">
    <property type="term" value="F:myosin V binding"/>
    <property type="evidence" value="ECO:0000266"/>
    <property type="project" value="RGD"/>
</dbReference>
<dbReference type="GO" id="GO:0019904">
    <property type="term" value="F:protein domain specific binding"/>
    <property type="evidence" value="ECO:0000266"/>
    <property type="project" value="RGD"/>
</dbReference>
<dbReference type="GO" id="GO:0099641">
    <property type="term" value="P:anterograde axonal protein transport"/>
    <property type="evidence" value="ECO:0000315"/>
    <property type="project" value="UniProtKB"/>
</dbReference>
<dbReference type="GO" id="GO:0006887">
    <property type="term" value="P:exocytosis"/>
    <property type="evidence" value="ECO:0000318"/>
    <property type="project" value="GO_Central"/>
</dbReference>
<dbReference type="GO" id="GO:0071985">
    <property type="term" value="P:multivesicular body sorting pathway"/>
    <property type="evidence" value="ECO:0000266"/>
    <property type="project" value="RGD"/>
</dbReference>
<dbReference type="GO" id="GO:0045921">
    <property type="term" value="P:positive regulation of exocytosis"/>
    <property type="evidence" value="ECO:0000266"/>
    <property type="project" value="RGD"/>
</dbReference>
<dbReference type="GO" id="GO:0017157">
    <property type="term" value="P:regulation of exocytosis"/>
    <property type="evidence" value="ECO:0000314"/>
    <property type="project" value="RGD"/>
</dbReference>
<dbReference type="GO" id="GO:0048488">
    <property type="term" value="P:synaptic vesicle endocytosis"/>
    <property type="evidence" value="ECO:0000314"/>
    <property type="project" value="SynGO"/>
</dbReference>
<dbReference type="CDD" id="cd04127">
    <property type="entry name" value="Rab27A"/>
    <property type="match status" value="1"/>
</dbReference>
<dbReference type="FunFam" id="3.40.50.300:FF:000402">
    <property type="entry name" value="Ras-related protein Rab-27A"/>
    <property type="match status" value="1"/>
</dbReference>
<dbReference type="Gene3D" id="3.40.50.300">
    <property type="entry name" value="P-loop containing nucleotide triphosphate hydrolases"/>
    <property type="match status" value="1"/>
</dbReference>
<dbReference type="InterPro" id="IPR027417">
    <property type="entry name" value="P-loop_NTPase"/>
</dbReference>
<dbReference type="InterPro" id="IPR041837">
    <property type="entry name" value="Rab27a/b"/>
</dbReference>
<dbReference type="InterPro" id="IPR005225">
    <property type="entry name" value="Small_GTP-bd"/>
</dbReference>
<dbReference type="InterPro" id="IPR001806">
    <property type="entry name" value="Small_GTPase"/>
</dbReference>
<dbReference type="InterPro" id="IPR050305">
    <property type="entry name" value="Small_GTPase_Rab"/>
</dbReference>
<dbReference type="NCBIfam" id="TIGR00231">
    <property type="entry name" value="small_GTP"/>
    <property type="match status" value="1"/>
</dbReference>
<dbReference type="PANTHER" id="PTHR47980">
    <property type="entry name" value="LD44762P"/>
    <property type="match status" value="1"/>
</dbReference>
<dbReference type="Pfam" id="PF00071">
    <property type="entry name" value="Ras"/>
    <property type="match status" value="1"/>
</dbReference>
<dbReference type="PRINTS" id="PR00449">
    <property type="entry name" value="RASTRNSFRMNG"/>
</dbReference>
<dbReference type="SMART" id="SM00175">
    <property type="entry name" value="RAB"/>
    <property type="match status" value="1"/>
</dbReference>
<dbReference type="SMART" id="SM00176">
    <property type="entry name" value="RAN"/>
    <property type="match status" value="1"/>
</dbReference>
<dbReference type="SMART" id="SM00173">
    <property type="entry name" value="RAS"/>
    <property type="match status" value="1"/>
</dbReference>
<dbReference type="SMART" id="SM00174">
    <property type="entry name" value="RHO"/>
    <property type="match status" value="1"/>
</dbReference>
<dbReference type="SUPFAM" id="SSF52540">
    <property type="entry name" value="P-loop containing nucleoside triphosphate hydrolases"/>
    <property type="match status" value="1"/>
</dbReference>
<dbReference type="PROSITE" id="PS51419">
    <property type="entry name" value="RAB"/>
    <property type="match status" value="1"/>
</dbReference>
<sequence length="218" mass="24620">MTDGDYDYLIKLLALGDSGVGKTTFLYRYTDNKFNPKFITTVGIDFREKRVVYDTQGADGSSGKAFKVHLQLWDTAGQERFRSLTTAFFRDAMGFLLMFDLTSQQSFLNVRNWMSQLQANAYCENPDIVLIGNKADLLDQREVNERQARELAEKYGIPYFETSAATGQNVEKSVETLLDLIMKRMEKCVEKTQVPDTVNGVNSGKVDGEKPAEKKCAC</sequence>
<evidence type="ECO:0000250" key="1"/>
<evidence type="ECO:0000250" key="2">
    <source>
        <dbReference type="UniProtKB" id="O00194"/>
    </source>
</evidence>
<evidence type="ECO:0000250" key="3">
    <source>
        <dbReference type="UniProtKB" id="Q8HZJ5"/>
    </source>
</evidence>
<evidence type="ECO:0000250" key="4">
    <source>
        <dbReference type="UniProtKB" id="Q99P58"/>
    </source>
</evidence>
<evidence type="ECO:0000269" key="5">
    <source>
    </source>
</evidence>
<evidence type="ECO:0000305" key="6"/>
<reference key="1">
    <citation type="submission" date="2000-12" db="EMBL/GenBank/DDBJ databases">
        <title>Expression of small GTP binding rab proteins in rat long bones.</title>
        <authorList>
            <person name="Zhao H."/>
            <person name="Vaananen K."/>
        </authorList>
    </citation>
    <scope>NUCLEOTIDE SEQUENCE [MRNA]</scope>
    <source>
        <strain>Sprague-Dawley</strain>
        <tissue>Bone</tissue>
    </source>
</reference>
<reference key="2">
    <citation type="journal article" date="2011" name="J. Neurosci.">
        <title>JIP3 mediates TrkB axonal anterograde transport and enhances BDNF signaling by directly bridging TrkB with kinesin-1.</title>
        <authorList>
            <person name="Huang S.H."/>
            <person name="Duan S."/>
            <person name="Sun T."/>
            <person name="Wang J."/>
            <person name="Zhao L."/>
            <person name="Geng Z."/>
            <person name="Yan J."/>
            <person name="Sun H.J."/>
            <person name="Chen Z.Y."/>
        </authorList>
    </citation>
    <scope>FUNCTION</scope>
</reference>
<feature type="initiator methionine" description="Removed" evidence="2">
    <location>
        <position position="1"/>
    </location>
</feature>
<feature type="chain" id="PRO_0000121226" description="Ras-related protein Rab-27B">
    <location>
        <begin position="2"/>
        <end position="218"/>
    </location>
</feature>
<feature type="short sequence motif" description="Effector region" evidence="1">
    <location>
        <begin position="38"/>
        <end position="46"/>
    </location>
</feature>
<feature type="binding site" evidence="1">
    <location>
        <begin position="16"/>
        <end position="24"/>
    </location>
    <ligand>
        <name>GTP</name>
        <dbReference type="ChEBI" id="CHEBI:37565"/>
    </ligand>
</feature>
<feature type="binding site" evidence="1">
    <location>
        <begin position="74"/>
        <end position="78"/>
    </location>
    <ligand>
        <name>GTP</name>
        <dbReference type="ChEBI" id="CHEBI:37565"/>
    </ligand>
</feature>
<feature type="binding site" evidence="1">
    <location>
        <begin position="133"/>
        <end position="136"/>
    </location>
    <ligand>
        <name>GTP</name>
        <dbReference type="ChEBI" id="CHEBI:37565"/>
    </ligand>
</feature>
<feature type="binding site" evidence="1">
    <location>
        <begin position="163"/>
        <end position="165"/>
    </location>
    <ligand>
        <name>GTP</name>
        <dbReference type="ChEBI" id="CHEBI:37565"/>
    </ligand>
</feature>
<feature type="modified residue" description="N-acetylthreonine" evidence="2">
    <location>
        <position position="2"/>
    </location>
</feature>
<feature type="modified residue" description="Cysteine methyl ester" evidence="1">
    <location>
        <position position="218"/>
    </location>
</feature>
<feature type="lipid moiety-binding region" description="S-geranylgeranyl cysteine" evidence="1">
    <location>
        <position position="216"/>
    </location>
</feature>
<feature type="lipid moiety-binding region" description="S-geranylgeranyl cysteine" evidence="1">
    <location>
        <position position="218"/>
    </location>
</feature>
<feature type="disulfide bond" evidence="1">
    <location>
        <begin position="123"/>
        <end position="188"/>
    </location>
</feature>